<comment type="function">
    <text evidence="1">Capsid protein (CA) is the structural component of the virus-like particle (VLP), forming the shell that encapsulates the retrotransposons dimeric RNA genome. The particles are assembled from trimer-clustered units and there are holes in the capsid shells that allow for the diffusion of macromolecules. CA also has nucleocapsid-like chaperone activity, promoting primer tRNA(i)-Met annealing to the multipartite primer-binding site (PBS), dimerization of Ty1 RNA and initiation of reverse transcription (By similarity).</text>
</comment>
<comment type="subunit">
    <text evidence="1">Homotrimer.</text>
</comment>
<comment type="subcellular location">
    <subcellularLocation>
        <location evidence="1">Cytoplasm</location>
    </subcellularLocation>
</comment>
<comment type="alternative products">
    <event type="ribosomal frameshifting"/>
    <isoform>
        <id>Q03856-1</id>
        <name>Transposon Ty1-DR1 Gag polyprotein</name>
        <sequence type="displayed"/>
    </isoform>
    <isoform>
        <id>Q03855-1</id>
        <name>Transposon Ty1-DR1 Gag-Pol polyprotein</name>
        <sequence type="external"/>
    </isoform>
    <text evidence="1">The Gag-Pol polyprotein is generated by a +1 ribosomal frameshift. The ratio of Gag:Gag-Pol varies between 20:1 and 5:1 (By similarity).</text>
</comment>
<comment type="induction">
    <text evidence="4">Ty1-DR1 is a weakly expressed element. Induced under amino acid starvation conditions by GCN4.</text>
</comment>
<comment type="domain">
    <text evidence="1">The C-terminal RNA-binding region of CA is sufficient for all its nucleocapsid-like chaperone activities.</text>
</comment>
<comment type="miscellaneous">
    <text>Retrotransposons are mobile genetic entities that are able to replicate via an RNA intermediate and a reverse transcription step. In contrast to retroviruses, retrotransposons are non-infectious, lack an envelope and remain intracellular. Ty1 retrotransposons belong to the copia elements (pseudoviridae).</text>
</comment>
<comment type="miscellaneous">
    <molecule>Isoform Transposon Ty1-DR1 Gag polyprotein</molecule>
    <text>Produced by conventional translation.</text>
</comment>
<dbReference type="EMBL" id="Z47746">
    <property type="protein sequence ID" value="CAA87674.1"/>
    <property type="molecule type" value="Genomic_DNA"/>
</dbReference>
<dbReference type="EMBL" id="BK006938">
    <property type="protein sequence ID" value="DAA11945.1"/>
    <property type="molecule type" value="Genomic_DNA"/>
</dbReference>
<dbReference type="PIR" id="S51249">
    <property type="entry name" value="S51249"/>
</dbReference>
<dbReference type="RefSeq" id="NP_058141.1">
    <molecule id="Q03856-1"/>
    <property type="nucleotide sequence ID" value="NM_001184416.1"/>
</dbReference>
<dbReference type="SMR" id="Q03856"/>
<dbReference type="BioGRID" id="32156">
    <property type="interactions" value="1"/>
</dbReference>
<dbReference type="FunCoup" id="Q03856">
    <property type="interactions" value="63"/>
</dbReference>
<dbReference type="GlyGen" id="Q03856">
    <property type="glycosylation" value="2 sites"/>
</dbReference>
<dbReference type="iPTMnet" id="Q03856"/>
<dbReference type="PaxDb" id="4932-YDR098C-A"/>
<dbReference type="PeptideAtlas" id="Q03856"/>
<dbReference type="GeneID" id="851675"/>
<dbReference type="KEGG" id="sce:YDR098C-A"/>
<dbReference type="AGR" id="SGD:S000007390"/>
<dbReference type="SGD" id="S000007390">
    <property type="gene designation" value="YDR098C-A"/>
</dbReference>
<dbReference type="VEuPathDB" id="FungiDB:YDR098C-A"/>
<dbReference type="eggNOG" id="KOG0017">
    <property type="taxonomic scope" value="Eukaryota"/>
</dbReference>
<dbReference type="HOGENOM" id="CLU_045291_1_0_1"/>
<dbReference type="InParanoid" id="Q03856"/>
<dbReference type="OrthoDB" id="4046078at2759"/>
<dbReference type="Proteomes" id="UP000002311">
    <property type="component" value="Chromosome IV"/>
</dbReference>
<dbReference type="RNAct" id="Q03856">
    <property type="molecule type" value="protein"/>
</dbReference>
<dbReference type="GO" id="GO:0005737">
    <property type="term" value="C:cytoplasm"/>
    <property type="evidence" value="ECO:0007669"/>
    <property type="project" value="UniProtKB-SubCell"/>
</dbReference>
<dbReference type="GO" id="GO:0003723">
    <property type="term" value="F:RNA binding"/>
    <property type="evidence" value="ECO:0007669"/>
    <property type="project" value="UniProtKB-KW"/>
</dbReference>
<dbReference type="GO" id="GO:0075523">
    <property type="term" value="P:viral translational frameshifting"/>
    <property type="evidence" value="ECO:0007669"/>
    <property type="project" value="UniProtKB-KW"/>
</dbReference>
<dbReference type="InterPro" id="IPR015820">
    <property type="entry name" value="TYA"/>
</dbReference>
<dbReference type="Pfam" id="PF01021">
    <property type="entry name" value="TYA"/>
    <property type="match status" value="1"/>
</dbReference>
<protein>
    <recommendedName>
        <fullName>Transposon Ty1-DR1 Gag polyprotein</fullName>
    </recommendedName>
    <alternativeName>
        <fullName>Gag-p49</fullName>
    </alternativeName>
    <alternativeName>
        <fullName>Transposon Ty1 protein A</fullName>
        <shortName>TY1A</shortName>
        <shortName>TYA</shortName>
    </alternativeName>
    <alternativeName>
        <fullName>p58</fullName>
    </alternativeName>
    <component>
        <recommendedName>
            <fullName>Capsid protein</fullName>
            <shortName>CA</shortName>
        </recommendedName>
        <alternativeName>
            <fullName>Gag-p45</fullName>
        </alternativeName>
        <alternativeName>
            <fullName>p54</fullName>
        </alternativeName>
    </component>
    <component>
        <recommendedName>
            <fullName>Gag-p4</fullName>
        </recommendedName>
    </component>
</protein>
<proteinExistence type="evidence at transcript level"/>
<accession>Q03856</accession>
<accession>D6VS85</accession>
<gene>
    <name type="primary">TY1A-DR1</name>
    <name type="synonym">YDRCTy1-1 GAG</name>
    <name type="ordered locus">YDR098C-A</name>
    <name type="ORF">YD8557.07c</name>
</gene>
<evidence type="ECO:0000250" key="1"/>
<evidence type="ECO:0000250" key="2">
    <source>
        <dbReference type="UniProtKB" id="Q12441"/>
    </source>
</evidence>
<evidence type="ECO:0000256" key="3">
    <source>
        <dbReference type="SAM" id="MobiDB-lite"/>
    </source>
</evidence>
<evidence type="ECO:0000269" key="4">
    <source>
    </source>
</evidence>
<reference key="1">
    <citation type="journal article" date="1997" name="Nature">
        <title>The nucleotide sequence of Saccharomyces cerevisiae chromosome IV.</title>
        <authorList>
            <person name="Jacq C."/>
            <person name="Alt-Moerbe J."/>
            <person name="Andre B."/>
            <person name="Arnold W."/>
            <person name="Bahr A."/>
            <person name="Ballesta J.P.G."/>
            <person name="Bargues M."/>
            <person name="Baron L."/>
            <person name="Becker A."/>
            <person name="Biteau N."/>
            <person name="Bloecker H."/>
            <person name="Blugeon C."/>
            <person name="Boskovic J."/>
            <person name="Brandt P."/>
            <person name="Brueckner M."/>
            <person name="Buitrago M.J."/>
            <person name="Coster F."/>
            <person name="Delaveau T."/>
            <person name="del Rey F."/>
            <person name="Dujon B."/>
            <person name="Eide L.G."/>
            <person name="Garcia-Cantalejo J.M."/>
            <person name="Goffeau A."/>
            <person name="Gomez-Peris A."/>
            <person name="Granotier C."/>
            <person name="Hanemann V."/>
            <person name="Hankeln T."/>
            <person name="Hoheisel J.D."/>
            <person name="Jaeger W."/>
            <person name="Jimenez A."/>
            <person name="Jonniaux J.-L."/>
            <person name="Kraemer C."/>
            <person name="Kuester H."/>
            <person name="Laamanen P."/>
            <person name="Legros Y."/>
            <person name="Louis E.J."/>
            <person name="Moeller-Rieker S."/>
            <person name="Monnet A."/>
            <person name="Moro M."/>
            <person name="Mueller-Auer S."/>
            <person name="Nussbaumer B."/>
            <person name="Paricio N."/>
            <person name="Paulin L."/>
            <person name="Perea J."/>
            <person name="Perez-Alonso M."/>
            <person name="Perez-Ortin J.E."/>
            <person name="Pohl T.M."/>
            <person name="Prydz H."/>
            <person name="Purnelle B."/>
            <person name="Rasmussen S.W."/>
            <person name="Remacha M.A."/>
            <person name="Revuelta J.L."/>
            <person name="Rieger M."/>
            <person name="Salom D."/>
            <person name="Saluz H.P."/>
            <person name="Saiz J.E."/>
            <person name="Saren A.-M."/>
            <person name="Schaefer M."/>
            <person name="Scharfe M."/>
            <person name="Schmidt E.R."/>
            <person name="Schneider C."/>
            <person name="Scholler P."/>
            <person name="Schwarz S."/>
            <person name="Soler-Mira A."/>
            <person name="Urrestarazu L.A."/>
            <person name="Verhasselt P."/>
            <person name="Vissers S."/>
            <person name="Voet M."/>
            <person name="Volckaert G."/>
            <person name="Wagner G."/>
            <person name="Wambutt R."/>
            <person name="Wedler E."/>
            <person name="Wedler H."/>
            <person name="Woelfl S."/>
            <person name="Harris D.E."/>
            <person name="Bowman S."/>
            <person name="Brown D."/>
            <person name="Churcher C.M."/>
            <person name="Connor R."/>
            <person name="Dedman K."/>
            <person name="Gentles S."/>
            <person name="Hamlin N."/>
            <person name="Hunt S."/>
            <person name="Jones L."/>
            <person name="McDonald S."/>
            <person name="Murphy L.D."/>
            <person name="Niblett D."/>
            <person name="Odell C."/>
            <person name="Oliver K."/>
            <person name="Rajandream M.A."/>
            <person name="Richards C."/>
            <person name="Shore L."/>
            <person name="Walsh S.V."/>
            <person name="Barrell B.G."/>
            <person name="Dietrich F.S."/>
            <person name="Mulligan J.T."/>
            <person name="Allen E."/>
            <person name="Araujo R."/>
            <person name="Aviles E."/>
            <person name="Berno A."/>
            <person name="Carpenter J."/>
            <person name="Chen E."/>
            <person name="Cherry J.M."/>
            <person name="Chung E."/>
            <person name="Duncan M."/>
            <person name="Hunicke-Smith S."/>
            <person name="Hyman R.W."/>
            <person name="Komp C."/>
            <person name="Lashkari D."/>
            <person name="Lew H."/>
            <person name="Lin D."/>
            <person name="Mosedale D."/>
            <person name="Nakahara K."/>
            <person name="Namath A."/>
            <person name="Oefner P."/>
            <person name="Oh C."/>
            <person name="Petel F.X."/>
            <person name="Roberts D."/>
            <person name="Schramm S."/>
            <person name="Schroeder M."/>
            <person name="Shogren T."/>
            <person name="Shroff N."/>
            <person name="Winant A."/>
            <person name="Yelton M.A."/>
            <person name="Botstein D."/>
            <person name="Davis R.W."/>
            <person name="Johnston M."/>
            <person name="Andrews S."/>
            <person name="Brinkman R."/>
            <person name="Cooper J."/>
            <person name="Ding H."/>
            <person name="Du Z."/>
            <person name="Favello A."/>
            <person name="Fulton L."/>
            <person name="Gattung S."/>
            <person name="Greco T."/>
            <person name="Hallsworth K."/>
            <person name="Hawkins J."/>
            <person name="Hillier L.W."/>
            <person name="Jier M."/>
            <person name="Johnson D."/>
            <person name="Johnston L."/>
            <person name="Kirsten J."/>
            <person name="Kucaba T."/>
            <person name="Langston Y."/>
            <person name="Latreille P."/>
            <person name="Le T."/>
            <person name="Mardis E."/>
            <person name="Menezes S."/>
            <person name="Miller N."/>
            <person name="Nhan M."/>
            <person name="Pauley A."/>
            <person name="Peluso D."/>
            <person name="Rifkin L."/>
            <person name="Riles L."/>
            <person name="Taich A."/>
            <person name="Trevaskis E."/>
            <person name="Vignati D."/>
            <person name="Wilcox L."/>
            <person name="Wohldman P."/>
            <person name="Vaudin M."/>
            <person name="Wilson R."/>
            <person name="Waterston R."/>
            <person name="Albermann K."/>
            <person name="Hani J."/>
            <person name="Heumann K."/>
            <person name="Kleine K."/>
            <person name="Mewes H.-W."/>
            <person name="Zollner A."/>
            <person name="Zaccaria P."/>
        </authorList>
    </citation>
    <scope>NUCLEOTIDE SEQUENCE [LARGE SCALE GENOMIC DNA]</scope>
    <source>
        <strain>ATCC 204508 / S288c</strain>
    </source>
</reference>
<reference key="2">
    <citation type="journal article" date="2014" name="G3 (Bethesda)">
        <title>The reference genome sequence of Saccharomyces cerevisiae: Then and now.</title>
        <authorList>
            <person name="Engel S.R."/>
            <person name="Dietrich F.S."/>
            <person name="Fisk D.G."/>
            <person name="Binkley G."/>
            <person name="Balakrishnan R."/>
            <person name="Costanzo M.C."/>
            <person name="Dwight S.S."/>
            <person name="Hitz B.C."/>
            <person name="Karra K."/>
            <person name="Nash R.S."/>
            <person name="Weng S."/>
            <person name="Wong E.D."/>
            <person name="Lloyd P."/>
            <person name="Skrzypek M.S."/>
            <person name="Miyasato S.R."/>
            <person name="Simison M."/>
            <person name="Cherry J.M."/>
        </authorList>
    </citation>
    <scope>GENOME REANNOTATION</scope>
    <source>
        <strain>ATCC 204508 / S288c</strain>
    </source>
</reference>
<reference key="3">
    <citation type="journal article" date="1998" name="Genome Res.">
        <title>Transposable elements and genome organization: a comprehensive survey of retrotransposons revealed by the complete Saccharomyces cerevisiae genome sequence.</title>
        <authorList>
            <person name="Kim J.M."/>
            <person name="Vanguri S."/>
            <person name="Boeke J.D."/>
            <person name="Gabriel A."/>
            <person name="Voytas D.F."/>
        </authorList>
    </citation>
    <scope>NOMENCLATURE</scope>
</reference>
<reference key="4">
    <citation type="journal article" date="2002" name="Mol. Cell. Biol.">
        <title>Differential effects of chromatin and Gcn4 on the 50-fold range of expression among individual yeast Ty1 retrotransposons.</title>
        <authorList>
            <person name="Morillon A."/>
            <person name="Benard L."/>
            <person name="Springer M."/>
            <person name="Lesage P."/>
        </authorList>
    </citation>
    <scope>INDUCTION</scope>
</reference>
<reference key="5">
    <citation type="journal article" date="2005" name="Cytogenet. Genome Res.">
        <title>Happy together: the life and times of Ty retrotransposons and their hosts.</title>
        <authorList>
            <person name="Lesage P."/>
            <person name="Todeschini A.L."/>
        </authorList>
    </citation>
    <scope>REVIEW</scope>
</reference>
<name>YD11A_YEAST</name>
<keyword id="KW-0963">Cytoplasm</keyword>
<keyword id="KW-0597">Phosphoprotein</keyword>
<keyword id="KW-1185">Reference proteome</keyword>
<keyword id="KW-0688">Ribosomal frameshifting</keyword>
<keyword id="KW-0694">RNA-binding</keyword>
<keyword id="KW-0814">Transposable element</keyword>
<organism>
    <name type="scientific">Saccharomyces cerevisiae (strain ATCC 204508 / S288c)</name>
    <name type="common">Baker's yeast</name>
    <dbReference type="NCBI Taxonomy" id="559292"/>
    <lineage>
        <taxon>Eukaryota</taxon>
        <taxon>Fungi</taxon>
        <taxon>Dikarya</taxon>
        <taxon>Ascomycota</taxon>
        <taxon>Saccharomycotina</taxon>
        <taxon>Saccharomycetes</taxon>
        <taxon>Saccharomycetales</taxon>
        <taxon>Saccharomycetaceae</taxon>
        <taxon>Saccharomyces</taxon>
    </lineage>
</organism>
<feature type="chain" id="PRO_0000279006" description="Transposon Ty1-DR1 Gag polyprotein">
    <location>
        <begin position="1"/>
        <end position="440"/>
    </location>
</feature>
<feature type="chain" id="PRO_0000279007" description="Capsid protein" evidence="1">
    <location>
        <begin position="1"/>
        <end position="401"/>
    </location>
</feature>
<feature type="peptide" id="PRO_0000279008" description="Gag-p4" evidence="1">
    <location>
        <begin position="402"/>
        <end position="440"/>
    </location>
</feature>
<feature type="region of interest" description="Disordered" evidence="3">
    <location>
        <begin position="1"/>
        <end position="93"/>
    </location>
</feature>
<feature type="region of interest" description="Disordered" evidence="3">
    <location>
        <begin position="126"/>
        <end position="173"/>
    </location>
</feature>
<feature type="region of interest" description="RNA-binding" evidence="1">
    <location>
        <begin position="299"/>
        <end position="401"/>
    </location>
</feature>
<feature type="region of interest" description="Disordered" evidence="3">
    <location>
        <begin position="352"/>
        <end position="440"/>
    </location>
</feature>
<feature type="compositionally biased region" description="Polar residues" evidence="3">
    <location>
        <begin position="1"/>
        <end position="10"/>
    </location>
</feature>
<feature type="compositionally biased region" description="Polar residues" evidence="3">
    <location>
        <begin position="48"/>
        <end position="60"/>
    </location>
</feature>
<feature type="compositionally biased region" description="Polar residues" evidence="3">
    <location>
        <begin position="127"/>
        <end position="152"/>
    </location>
</feature>
<feature type="compositionally biased region" description="Low complexity" evidence="3">
    <location>
        <begin position="153"/>
        <end position="165"/>
    </location>
</feature>
<feature type="compositionally biased region" description="Low complexity" evidence="3">
    <location>
        <begin position="402"/>
        <end position="418"/>
    </location>
</feature>
<feature type="compositionally biased region" description="Polar residues" evidence="3">
    <location>
        <begin position="419"/>
        <end position="428"/>
    </location>
</feature>
<feature type="compositionally biased region" description="Basic and acidic residues" evidence="3">
    <location>
        <begin position="429"/>
        <end position="440"/>
    </location>
</feature>
<feature type="site" description="Cleavage; by Ty1 protease" evidence="1">
    <location>
        <begin position="401"/>
        <end position="402"/>
    </location>
</feature>
<feature type="modified residue" description="Phosphoserine" evidence="2">
    <location>
        <position position="416"/>
    </location>
</feature>
<sequence>MESQQLSNYPHISHGSACASVTSKEVHTNQDPLDVSASKIQEYDKASTKANSQQTTTPASSAVPENPHHASPQPASVPPPQNGPYPQQCMMTQNQANPSGWSFYGHPSMIPYTPYQMSPMYFPPGPQSQFPQYPSSVGTPLSTPSPESGNTFTDSSSADSDMTSTKKYVRPPPMLTSPNDFPNWVKTYIKFLQNSNLGGIIPTVNGKPVRQITDDELTFLYNTFQIFAPSQFLPTWVKDILSVDYTDIMKILSKSIEKMQSDTQEANDIVTLANLQYNGSTPADAFETKVTNIIDRLNNNGIHINNKVACQLIMRGLSGEYKFLRYTRHRHLNMTVAELFLDIHAIYEEQQGSRNSKPNYRRNPSDEKNDSRSYTNTTKPKVIARNPQKTNNSKSKTARAHNVSTSNNSPSTDNDSISKSTTEPIQLNNKHDLHLRPGTY</sequence>